<feature type="chain" id="PRO_0000113718" description="Serine hydroxymethyltransferase">
    <location>
        <begin position="1"/>
        <end position="433"/>
    </location>
</feature>
<feature type="binding site" evidence="1">
    <location>
        <position position="121"/>
    </location>
    <ligand>
        <name>(6S)-5,6,7,8-tetrahydrofolate</name>
        <dbReference type="ChEBI" id="CHEBI:57453"/>
    </ligand>
</feature>
<feature type="binding site" evidence="1">
    <location>
        <begin position="125"/>
        <end position="127"/>
    </location>
    <ligand>
        <name>(6S)-5,6,7,8-tetrahydrofolate</name>
        <dbReference type="ChEBI" id="CHEBI:57453"/>
    </ligand>
</feature>
<feature type="site" description="Plays an important role in substrate specificity" evidence="1">
    <location>
        <position position="230"/>
    </location>
</feature>
<feature type="modified residue" description="N6-(pyridoxal phosphate)lysine" evidence="1">
    <location>
        <position position="231"/>
    </location>
</feature>
<protein>
    <recommendedName>
        <fullName evidence="1">Serine hydroxymethyltransferase</fullName>
        <shortName evidence="1">SHMT</shortName>
        <shortName evidence="1">Serine methylase</shortName>
        <ecNumber evidence="1">2.1.2.-</ecNumber>
    </recommendedName>
</protein>
<name>GLYA_PICTO</name>
<gene>
    <name evidence="1" type="primary">glyA</name>
    <name type="ordered locus">PTO0611</name>
</gene>
<reference key="1">
    <citation type="journal article" date="2004" name="Proc. Natl. Acad. Sci. U.S.A.">
        <title>Genome sequence of Picrophilus torridus and its implications for life around pH 0.</title>
        <authorList>
            <person name="Fuetterer O."/>
            <person name="Angelov A."/>
            <person name="Liesegang H."/>
            <person name="Gottschalk G."/>
            <person name="Schleper C."/>
            <person name="Schepers B."/>
            <person name="Dock C."/>
            <person name="Antranikian G."/>
            <person name="Liebl W."/>
        </authorList>
    </citation>
    <scope>NUCLEOTIDE SEQUENCE [LARGE SCALE GENOMIC DNA]</scope>
    <source>
        <strain>ATCC 700027 / DSM 9790 / JCM 10055 / NBRC 100828 / KAW 2/3</strain>
    </source>
</reference>
<accession>Q6L1F6</accession>
<sequence length="433" mass="48545">MLDNKKEYLKDAMFIRDMAMQHEQLFRESIPLIASENIMSPLAMEMLLTDLGFRYAEGLPHHRYYQGNEYVDVIEDKTTELGKRLFNSKTFDPRPLSGTNANMAVLYALTEPGDKISVPPLSGGGHISAAKFGAVGFRGLKTVQYPFDINEMNIDIDGTIKTIKNERPKVCWFGQSVFLFPTPLKELQDAFNEVNARVVYDGAHVAGLIAGGEFQDPLREGAEIITGSTHKTLPGPQHGMIIGNTDDDTWKKVQRGVFPGTLSNHHLNAMAALGVTLAEELDFGRDYAKQIVKNARHLGEKLYEFGFNVLGEKNGFTRSHTLAVDVSKNGGGRKVAENLEKSGIILNKNLLPWDDNKNSQNPSGIRIGVQEITRIGFMEDDVTELAEILRDAVINEKPVNEIRRRALELKSRFNNIEYCYGNMKPYSYIKIFE</sequence>
<dbReference type="EC" id="2.1.2.-" evidence="1"/>
<dbReference type="EMBL" id="AE017261">
    <property type="protein sequence ID" value="AAT43196.1"/>
    <property type="molecule type" value="Genomic_DNA"/>
</dbReference>
<dbReference type="RefSeq" id="WP_011177412.1">
    <property type="nucleotide sequence ID" value="NC_005877.1"/>
</dbReference>
<dbReference type="SMR" id="Q6L1F6"/>
<dbReference type="FunCoup" id="Q6L1F6">
    <property type="interactions" value="313"/>
</dbReference>
<dbReference type="STRING" id="263820.PTO0611"/>
<dbReference type="PaxDb" id="263820-PTO0611"/>
<dbReference type="GeneID" id="2844844"/>
<dbReference type="KEGG" id="pto:PTO0611"/>
<dbReference type="PATRIC" id="fig|263820.9.peg.643"/>
<dbReference type="eggNOG" id="arCOG00070">
    <property type="taxonomic scope" value="Archaea"/>
</dbReference>
<dbReference type="HOGENOM" id="CLU_022477_2_1_2"/>
<dbReference type="InParanoid" id="Q6L1F6"/>
<dbReference type="OrthoDB" id="5821at2157"/>
<dbReference type="UniPathway" id="UPA00288">
    <property type="reaction ID" value="UER01023"/>
</dbReference>
<dbReference type="Proteomes" id="UP000000438">
    <property type="component" value="Chromosome"/>
</dbReference>
<dbReference type="GO" id="GO:0005737">
    <property type="term" value="C:cytoplasm"/>
    <property type="evidence" value="ECO:0007669"/>
    <property type="project" value="UniProtKB-SubCell"/>
</dbReference>
<dbReference type="GO" id="GO:0004372">
    <property type="term" value="F:glycine hydroxymethyltransferase activity"/>
    <property type="evidence" value="ECO:0007669"/>
    <property type="project" value="UniProtKB-UniRule"/>
</dbReference>
<dbReference type="GO" id="GO:0030170">
    <property type="term" value="F:pyridoxal phosphate binding"/>
    <property type="evidence" value="ECO:0007669"/>
    <property type="project" value="UniProtKB-UniRule"/>
</dbReference>
<dbReference type="GO" id="GO:0019264">
    <property type="term" value="P:glycine biosynthetic process from serine"/>
    <property type="evidence" value="ECO:0007669"/>
    <property type="project" value="UniProtKB-UniRule"/>
</dbReference>
<dbReference type="GO" id="GO:0035999">
    <property type="term" value="P:tetrahydrofolate interconversion"/>
    <property type="evidence" value="ECO:0007669"/>
    <property type="project" value="InterPro"/>
</dbReference>
<dbReference type="CDD" id="cd00378">
    <property type="entry name" value="SHMT"/>
    <property type="match status" value="1"/>
</dbReference>
<dbReference type="FunFam" id="3.40.640.10:FF:000101">
    <property type="entry name" value="Serine hydroxymethyltransferase"/>
    <property type="match status" value="1"/>
</dbReference>
<dbReference type="Gene3D" id="3.90.1150.10">
    <property type="entry name" value="Aspartate Aminotransferase, domain 1"/>
    <property type="match status" value="1"/>
</dbReference>
<dbReference type="Gene3D" id="3.40.640.10">
    <property type="entry name" value="Type I PLP-dependent aspartate aminotransferase-like (Major domain)"/>
    <property type="match status" value="1"/>
</dbReference>
<dbReference type="HAMAP" id="MF_00051">
    <property type="entry name" value="SHMT"/>
    <property type="match status" value="1"/>
</dbReference>
<dbReference type="InterPro" id="IPR015424">
    <property type="entry name" value="PyrdxlP-dep_Trfase"/>
</dbReference>
<dbReference type="InterPro" id="IPR015421">
    <property type="entry name" value="PyrdxlP-dep_Trfase_major"/>
</dbReference>
<dbReference type="InterPro" id="IPR015422">
    <property type="entry name" value="PyrdxlP-dep_Trfase_small"/>
</dbReference>
<dbReference type="InterPro" id="IPR001085">
    <property type="entry name" value="Ser_HO-MeTrfase"/>
</dbReference>
<dbReference type="InterPro" id="IPR049943">
    <property type="entry name" value="Ser_HO-MeTrfase-like"/>
</dbReference>
<dbReference type="InterPro" id="IPR019798">
    <property type="entry name" value="Ser_HO-MeTrfase_PLP_BS"/>
</dbReference>
<dbReference type="InterPro" id="IPR039429">
    <property type="entry name" value="SHMT-like_dom"/>
</dbReference>
<dbReference type="NCBIfam" id="NF000586">
    <property type="entry name" value="PRK00011.1"/>
    <property type="match status" value="1"/>
</dbReference>
<dbReference type="PANTHER" id="PTHR11680">
    <property type="entry name" value="SERINE HYDROXYMETHYLTRANSFERASE"/>
    <property type="match status" value="1"/>
</dbReference>
<dbReference type="PANTHER" id="PTHR11680:SF35">
    <property type="entry name" value="SERINE HYDROXYMETHYLTRANSFERASE 1"/>
    <property type="match status" value="1"/>
</dbReference>
<dbReference type="Pfam" id="PF00464">
    <property type="entry name" value="SHMT"/>
    <property type="match status" value="1"/>
</dbReference>
<dbReference type="PIRSF" id="PIRSF000412">
    <property type="entry name" value="SHMT"/>
    <property type="match status" value="1"/>
</dbReference>
<dbReference type="SUPFAM" id="SSF53383">
    <property type="entry name" value="PLP-dependent transferases"/>
    <property type="match status" value="1"/>
</dbReference>
<dbReference type="PROSITE" id="PS00096">
    <property type="entry name" value="SHMT"/>
    <property type="match status" value="1"/>
</dbReference>
<evidence type="ECO:0000255" key="1">
    <source>
        <dbReference type="HAMAP-Rule" id="MF_00051"/>
    </source>
</evidence>
<comment type="function">
    <text evidence="1">Catalyzes the reversible interconversion of serine and glycine with a modified folate serving as the one-carbon carrier. Also exhibits a pteridine-independent aldolase activity toward beta-hydroxyamino acids, producing glycine and aldehydes, via a retro-aldol mechanism.</text>
</comment>
<comment type="cofactor">
    <cofactor evidence="1">
        <name>pyridoxal 5'-phosphate</name>
        <dbReference type="ChEBI" id="CHEBI:597326"/>
    </cofactor>
</comment>
<comment type="pathway">
    <text evidence="1">Amino-acid biosynthesis; glycine biosynthesis; glycine from L-serine: step 1/1.</text>
</comment>
<comment type="subunit">
    <text evidence="1">Homodimer.</text>
</comment>
<comment type="subcellular location">
    <subcellularLocation>
        <location evidence="1">Cytoplasm</location>
    </subcellularLocation>
</comment>
<comment type="similarity">
    <text evidence="1">Belongs to the SHMT family.</text>
</comment>
<proteinExistence type="inferred from homology"/>
<organism>
    <name type="scientific">Picrophilus torridus (strain ATCC 700027 / DSM 9790 / JCM 10055 / NBRC 100828 / KAW 2/3)</name>
    <dbReference type="NCBI Taxonomy" id="1122961"/>
    <lineage>
        <taxon>Archaea</taxon>
        <taxon>Methanobacteriati</taxon>
        <taxon>Thermoplasmatota</taxon>
        <taxon>Thermoplasmata</taxon>
        <taxon>Thermoplasmatales</taxon>
        <taxon>Picrophilaceae</taxon>
        <taxon>Picrophilus</taxon>
    </lineage>
</organism>
<keyword id="KW-0028">Amino-acid biosynthesis</keyword>
<keyword id="KW-0963">Cytoplasm</keyword>
<keyword id="KW-0554">One-carbon metabolism</keyword>
<keyword id="KW-0663">Pyridoxal phosphate</keyword>
<keyword id="KW-0808">Transferase</keyword>